<accession>A9KUC0</accession>
<dbReference type="EMBL" id="CP000891">
    <property type="protein sequence ID" value="ABX47231.1"/>
    <property type="molecule type" value="Genomic_DNA"/>
</dbReference>
<dbReference type="RefSeq" id="WP_006083777.1">
    <property type="nucleotide sequence ID" value="NC_009997.1"/>
</dbReference>
<dbReference type="SMR" id="A9KUC0"/>
<dbReference type="GeneID" id="11770417"/>
<dbReference type="KEGG" id="sbn:Sbal195_0049"/>
<dbReference type="HOGENOM" id="CLU_111574_1_0_6"/>
<dbReference type="Proteomes" id="UP000000770">
    <property type="component" value="Chromosome"/>
</dbReference>
<dbReference type="GO" id="GO:0005737">
    <property type="term" value="C:cytoplasm"/>
    <property type="evidence" value="ECO:0007669"/>
    <property type="project" value="UniProtKB-SubCell"/>
</dbReference>
<dbReference type="GO" id="GO:0051082">
    <property type="term" value="F:unfolded protein binding"/>
    <property type="evidence" value="ECO:0007669"/>
    <property type="project" value="InterPro"/>
</dbReference>
<dbReference type="GO" id="GO:0006457">
    <property type="term" value="P:protein folding"/>
    <property type="evidence" value="ECO:0007669"/>
    <property type="project" value="UniProtKB-UniRule"/>
</dbReference>
<dbReference type="GO" id="GO:0051262">
    <property type="term" value="P:protein tetramerization"/>
    <property type="evidence" value="ECO:0007669"/>
    <property type="project" value="InterPro"/>
</dbReference>
<dbReference type="GO" id="GO:0015031">
    <property type="term" value="P:protein transport"/>
    <property type="evidence" value="ECO:0007669"/>
    <property type="project" value="UniProtKB-UniRule"/>
</dbReference>
<dbReference type="Gene3D" id="3.10.420.10">
    <property type="entry name" value="SecB-like"/>
    <property type="match status" value="1"/>
</dbReference>
<dbReference type="HAMAP" id="MF_00821">
    <property type="entry name" value="SecB"/>
    <property type="match status" value="1"/>
</dbReference>
<dbReference type="InterPro" id="IPR003708">
    <property type="entry name" value="SecB"/>
</dbReference>
<dbReference type="InterPro" id="IPR035958">
    <property type="entry name" value="SecB-like_sf"/>
</dbReference>
<dbReference type="NCBIfam" id="NF004393">
    <property type="entry name" value="PRK05751.1-4"/>
    <property type="match status" value="1"/>
</dbReference>
<dbReference type="NCBIfam" id="TIGR00809">
    <property type="entry name" value="secB"/>
    <property type="match status" value="1"/>
</dbReference>
<dbReference type="PANTHER" id="PTHR36918">
    <property type="match status" value="1"/>
</dbReference>
<dbReference type="PANTHER" id="PTHR36918:SF1">
    <property type="entry name" value="PROTEIN-EXPORT PROTEIN SECB"/>
    <property type="match status" value="1"/>
</dbReference>
<dbReference type="Pfam" id="PF02556">
    <property type="entry name" value="SecB"/>
    <property type="match status" value="1"/>
</dbReference>
<dbReference type="PRINTS" id="PR01594">
    <property type="entry name" value="SECBCHAPRONE"/>
</dbReference>
<dbReference type="SUPFAM" id="SSF54611">
    <property type="entry name" value="SecB-like"/>
    <property type="match status" value="1"/>
</dbReference>
<organism>
    <name type="scientific">Shewanella baltica (strain OS195)</name>
    <dbReference type="NCBI Taxonomy" id="399599"/>
    <lineage>
        <taxon>Bacteria</taxon>
        <taxon>Pseudomonadati</taxon>
        <taxon>Pseudomonadota</taxon>
        <taxon>Gammaproteobacteria</taxon>
        <taxon>Alteromonadales</taxon>
        <taxon>Shewanellaceae</taxon>
        <taxon>Shewanella</taxon>
    </lineage>
</organism>
<reference key="1">
    <citation type="submission" date="2007-11" db="EMBL/GenBank/DDBJ databases">
        <title>Complete sequence of chromosome of Shewanella baltica OS195.</title>
        <authorList>
            <consortium name="US DOE Joint Genome Institute"/>
            <person name="Copeland A."/>
            <person name="Lucas S."/>
            <person name="Lapidus A."/>
            <person name="Barry K."/>
            <person name="Glavina del Rio T."/>
            <person name="Dalin E."/>
            <person name="Tice H."/>
            <person name="Pitluck S."/>
            <person name="Chain P."/>
            <person name="Malfatti S."/>
            <person name="Shin M."/>
            <person name="Vergez L."/>
            <person name="Schmutz J."/>
            <person name="Larimer F."/>
            <person name="Land M."/>
            <person name="Hauser L."/>
            <person name="Kyrpides N."/>
            <person name="Kim E."/>
            <person name="Brettar I."/>
            <person name="Rodrigues J."/>
            <person name="Konstantinidis K."/>
            <person name="Klappenbach J."/>
            <person name="Hofle M."/>
            <person name="Tiedje J."/>
            <person name="Richardson P."/>
        </authorList>
    </citation>
    <scope>NUCLEOTIDE SEQUENCE [LARGE SCALE GENOMIC DNA]</scope>
    <source>
        <strain>OS195</strain>
    </source>
</reference>
<keyword id="KW-0143">Chaperone</keyword>
<keyword id="KW-0963">Cytoplasm</keyword>
<keyword id="KW-0653">Protein transport</keyword>
<keyword id="KW-0811">Translocation</keyword>
<keyword id="KW-0813">Transport</keyword>
<evidence type="ECO:0000255" key="1">
    <source>
        <dbReference type="HAMAP-Rule" id="MF_00821"/>
    </source>
</evidence>
<feature type="chain" id="PRO_1000083866" description="Protein-export protein SecB">
    <location>
        <begin position="1"/>
        <end position="161"/>
    </location>
</feature>
<sequence length="161" mass="17483">MAEVANNEQQAPQFNIQRVYTKDVSFETPNSPAVFQKEWNPEVKLDLDTRSAKLADDVYEVVLSLTVTAQNGGDTAFLCEVQQAGIFSITGLTEPQLAHSLGAYCPNILFPYARETVGSLVGRGTFPQLNLAPVNFDALFAQYVQQRQAAATAPAAEEANA</sequence>
<proteinExistence type="inferred from homology"/>
<name>SECB_SHEB9</name>
<protein>
    <recommendedName>
        <fullName evidence="1">Protein-export protein SecB</fullName>
    </recommendedName>
</protein>
<comment type="function">
    <text evidence="1">One of the proteins required for the normal export of preproteins out of the cell cytoplasm. It is a molecular chaperone that binds to a subset of precursor proteins, maintaining them in a translocation-competent state. It also specifically binds to its receptor SecA.</text>
</comment>
<comment type="subunit">
    <text evidence="1">Homotetramer, a dimer of dimers. One homotetramer interacts with 1 SecA dimer.</text>
</comment>
<comment type="subcellular location">
    <subcellularLocation>
        <location evidence="1">Cytoplasm</location>
    </subcellularLocation>
</comment>
<comment type="similarity">
    <text evidence="1">Belongs to the SecB family.</text>
</comment>
<gene>
    <name evidence="1" type="primary">secB</name>
    <name type="ordered locus">Sbal195_0049</name>
</gene>